<protein>
    <recommendedName>
        <fullName evidence="1">Large ribosomal subunit protein uL15</fullName>
    </recommendedName>
    <alternativeName>
        <fullName evidence="3">50S ribosomal protein L15</fullName>
    </alternativeName>
</protein>
<name>RL15_CHLCV</name>
<keyword id="KW-0687">Ribonucleoprotein</keyword>
<keyword id="KW-0689">Ribosomal protein</keyword>
<keyword id="KW-0694">RNA-binding</keyword>
<keyword id="KW-0699">rRNA-binding</keyword>
<feature type="chain" id="PRO_0000251501" description="Large ribosomal subunit protein uL15">
    <location>
        <begin position="1"/>
        <end position="144"/>
    </location>
</feature>
<feature type="region of interest" description="Disordered" evidence="2">
    <location>
        <begin position="1"/>
        <end position="48"/>
    </location>
</feature>
<dbReference type="EMBL" id="AE015925">
    <property type="protein sequence ID" value="AAP04862.1"/>
    <property type="molecule type" value="Genomic_DNA"/>
</dbReference>
<dbReference type="RefSeq" id="WP_011006083.1">
    <property type="nucleotide sequence ID" value="NC_003361.3"/>
</dbReference>
<dbReference type="SMR" id="Q824N4"/>
<dbReference type="STRING" id="227941.CCA_00110"/>
<dbReference type="KEGG" id="cca:CCA_00110"/>
<dbReference type="eggNOG" id="COG0200">
    <property type="taxonomic scope" value="Bacteria"/>
</dbReference>
<dbReference type="HOGENOM" id="CLU_055188_4_2_0"/>
<dbReference type="OrthoDB" id="9810293at2"/>
<dbReference type="Proteomes" id="UP000002193">
    <property type="component" value="Chromosome"/>
</dbReference>
<dbReference type="GO" id="GO:0022625">
    <property type="term" value="C:cytosolic large ribosomal subunit"/>
    <property type="evidence" value="ECO:0007669"/>
    <property type="project" value="TreeGrafter"/>
</dbReference>
<dbReference type="GO" id="GO:0019843">
    <property type="term" value="F:rRNA binding"/>
    <property type="evidence" value="ECO:0007669"/>
    <property type="project" value="UniProtKB-UniRule"/>
</dbReference>
<dbReference type="GO" id="GO:0003735">
    <property type="term" value="F:structural constituent of ribosome"/>
    <property type="evidence" value="ECO:0007669"/>
    <property type="project" value="InterPro"/>
</dbReference>
<dbReference type="GO" id="GO:0006412">
    <property type="term" value="P:translation"/>
    <property type="evidence" value="ECO:0007669"/>
    <property type="project" value="UniProtKB-UniRule"/>
</dbReference>
<dbReference type="Gene3D" id="3.100.10.10">
    <property type="match status" value="1"/>
</dbReference>
<dbReference type="HAMAP" id="MF_01341">
    <property type="entry name" value="Ribosomal_uL15"/>
    <property type="match status" value="1"/>
</dbReference>
<dbReference type="InterPro" id="IPR030878">
    <property type="entry name" value="Ribosomal_uL15"/>
</dbReference>
<dbReference type="InterPro" id="IPR036227">
    <property type="entry name" value="Ribosomal_uL15/eL18_sf"/>
</dbReference>
<dbReference type="InterPro" id="IPR005749">
    <property type="entry name" value="Ribosomal_uL15_bac-type"/>
</dbReference>
<dbReference type="NCBIfam" id="TIGR01071">
    <property type="entry name" value="rplO_bact"/>
    <property type="match status" value="1"/>
</dbReference>
<dbReference type="PANTHER" id="PTHR12934">
    <property type="entry name" value="50S RIBOSOMAL PROTEIN L15"/>
    <property type="match status" value="1"/>
</dbReference>
<dbReference type="PANTHER" id="PTHR12934:SF11">
    <property type="entry name" value="LARGE RIBOSOMAL SUBUNIT PROTEIN UL15M"/>
    <property type="match status" value="1"/>
</dbReference>
<dbReference type="SUPFAM" id="SSF52080">
    <property type="entry name" value="Ribosomal proteins L15p and L18e"/>
    <property type="match status" value="1"/>
</dbReference>
<sequence length="144" mass="16216">MIKLESLQDPSPRKRRTKLLGRGPSSGHGKTSCRGHKGDGSRSGYKRRFGYEGGGVPLYRRVPTRGFSHKRFDKCVEEITTQRLNVLFNEGEEITLDALKEKRAIDKHAIRVKVIVKGELEKTFIWKDANVVLSQGVRNLIGVA</sequence>
<comment type="function">
    <text evidence="1">Binds to the 23S rRNA.</text>
</comment>
<comment type="subunit">
    <text evidence="1">Part of the 50S ribosomal subunit.</text>
</comment>
<comment type="similarity">
    <text evidence="1">Belongs to the universal ribosomal protein uL15 family.</text>
</comment>
<proteinExistence type="inferred from homology"/>
<reference key="1">
    <citation type="journal article" date="2003" name="Nucleic Acids Res.">
        <title>Genome sequence of Chlamydophila caviae (Chlamydia psittaci GPIC): examining the role of niche-specific genes in the evolution of the Chlamydiaceae.</title>
        <authorList>
            <person name="Read T.D."/>
            <person name="Myers G.S.A."/>
            <person name="Brunham R.C."/>
            <person name="Nelson W.C."/>
            <person name="Paulsen I.T."/>
            <person name="Heidelberg J.F."/>
            <person name="Holtzapple E.K."/>
            <person name="Khouri H.M."/>
            <person name="Federova N.B."/>
            <person name="Carty H.A."/>
            <person name="Umayam L.A."/>
            <person name="Haft D.H."/>
            <person name="Peterson J.D."/>
            <person name="Beanan M.J."/>
            <person name="White O."/>
            <person name="Salzberg S.L."/>
            <person name="Hsia R.-C."/>
            <person name="McClarty G."/>
            <person name="Rank R.G."/>
            <person name="Bavoil P.M."/>
            <person name="Fraser C.M."/>
        </authorList>
    </citation>
    <scope>NUCLEOTIDE SEQUENCE [LARGE SCALE GENOMIC DNA]</scope>
    <source>
        <strain>ATCC VR-813 / DSM 19441 / 03DC25 / GPIC</strain>
    </source>
</reference>
<accession>Q824N4</accession>
<evidence type="ECO:0000255" key="1">
    <source>
        <dbReference type="HAMAP-Rule" id="MF_01341"/>
    </source>
</evidence>
<evidence type="ECO:0000256" key="2">
    <source>
        <dbReference type="SAM" id="MobiDB-lite"/>
    </source>
</evidence>
<evidence type="ECO:0000305" key="3"/>
<gene>
    <name evidence="1" type="primary">rplO</name>
    <name type="ordered locus">CCA_00110</name>
</gene>
<organism>
    <name type="scientific">Chlamydia caviae (strain ATCC VR-813 / DSM 19441 / 03DC25 / GPIC)</name>
    <name type="common">Chlamydophila caviae</name>
    <dbReference type="NCBI Taxonomy" id="227941"/>
    <lineage>
        <taxon>Bacteria</taxon>
        <taxon>Pseudomonadati</taxon>
        <taxon>Chlamydiota</taxon>
        <taxon>Chlamydiia</taxon>
        <taxon>Chlamydiales</taxon>
        <taxon>Chlamydiaceae</taxon>
        <taxon>Chlamydia/Chlamydophila group</taxon>
        <taxon>Chlamydia</taxon>
    </lineage>
</organism>